<evidence type="ECO:0000250" key="1"/>
<evidence type="ECO:0000255" key="2"/>
<evidence type="ECO:0000255" key="3">
    <source>
        <dbReference type="PROSITE-ProRule" id="PRU00043"/>
    </source>
</evidence>
<evidence type="ECO:0000256" key="4">
    <source>
        <dbReference type="SAM" id="MobiDB-lite"/>
    </source>
</evidence>
<reference key="1">
    <citation type="journal article" date="2005" name="Nature">
        <title>Initial sequence of the chimpanzee genome and comparison with the human genome.</title>
        <authorList>
            <consortium name="Chimpanzee sequencing and analysis consortium"/>
        </authorList>
    </citation>
    <scope>NUCLEOTIDE SEQUENCE [LARGE SCALE GENOMIC DNA]</scope>
</reference>
<reference key="2">
    <citation type="journal article" date="2005" name="Genetics">
        <title>Comparative genomics and diversifying selection of the clustered vertebrate protocadherin genes.</title>
        <authorList>
            <person name="Wu Q."/>
        </authorList>
    </citation>
    <scope>IDENTIFICATION</scope>
</reference>
<feature type="signal peptide" evidence="2">
    <location>
        <begin position="1"/>
        <end position="29"/>
    </location>
</feature>
<feature type="chain" id="PRO_0000003909" description="Protocadherin alpha-13">
    <location>
        <begin position="30"/>
        <end position="950"/>
    </location>
</feature>
<feature type="topological domain" description="Extracellular" evidence="2">
    <location>
        <begin position="30"/>
        <end position="697"/>
    </location>
</feature>
<feature type="transmembrane region" description="Helical" evidence="2">
    <location>
        <begin position="698"/>
        <end position="718"/>
    </location>
</feature>
<feature type="topological domain" description="Cytoplasmic" evidence="2">
    <location>
        <begin position="719"/>
        <end position="950"/>
    </location>
</feature>
<feature type="domain" description="Cadherin 1" evidence="3">
    <location>
        <begin position="34"/>
        <end position="133"/>
    </location>
</feature>
<feature type="domain" description="Cadherin 2" evidence="3">
    <location>
        <begin position="134"/>
        <end position="242"/>
    </location>
</feature>
<feature type="domain" description="Cadherin 3" evidence="3">
    <location>
        <begin position="243"/>
        <end position="350"/>
    </location>
</feature>
<feature type="domain" description="Cadherin 4" evidence="3">
    <location>
        <begin position="351"/>
        <end position="455"/>
    </location>
</feature>
<feature type="domain" description="Cadherin 5" evidence="3">
    <location>
        <begin position="456"/>
        <end position="565"/>
    </location>
</feature>
<feature type="domain" description="Cadherin 6" evidence="3">
    <location>
        <begin position="581"/>
        <end position="678"/>
    </location>
</feature>
<feature type="repeat" description="PXXP 1">
    <location>
        <begin position="734"/>
        <end position="737"/>
    </location>
</feature>
<feature type="repeat" description="PXXP 2">
    <location>
        <begin position="774"/>
        <end position="777"/>
    </location>
</feature>
<feature type="repeat" description="PXXP 3">
    <location>
        <begin position="799"/>
        <end position="802"/>
    </location>
</feature>
<feature type="repeat" description="PXXP 4">
    <location>
        <begin position="832"/>
        <end position="835"/>
    </location>
</feature>
<feature type="repeat" description="PXXP 5">
    <location>
        <begin position="873"/>
        <end position="876"/>
    </location>
</feature>
<feature type="repeat" description="PXXP 6">
    <location>
        <begin position="891"/>
        <end position="894"/>
    </location>
</feature>
<feature type="region of interest" description="6 X 4 AA repeats of P-X-X-P">
    <location>
        <begin position="734"/>
        <end position="894"/>
    </location>
</feature>
<feature type="region of interest" description="Disordered" evidence="4">
    <location>
        <begin position="774"/>
        <end position="808"/>
    </location>
</feature>
<feature type="region of interest" description="Disordered" evidence="4">
    <location>
        <begin position="827"/>
        <end position="950"/>
    </location>
</feature>
<feature type="compositionally biased region" description="Basic and acidic residues" evidence="4">
    <location>
        <begin position="787"/>
        <end position="800"/>
    </location>
</feature>
<feature type="compositionally biased region" description="Basic and acidic residues" evidence="4">
    <location>
        <begin position="909"/>
        <end position="923"/>
    </location>
</feature>
<feature type="glycosylation site" description="N-linked (GlcNAc...) asparagine" evidence="2">
    <location>
        <position position="257"/>
    </location>
</feature>
<feature type="glycosylation site" description="N-linked (GlcNAc...) asparagine" evidence="2">
    <location>
        <position position="265"/>
    </location>
</feature>
<feature type="glycosylation site" description="N-linked (GlcNAc...) asparagine" evidence="2">
    <location>
        <position position="548"/>
    </location>
</feature>
<organism>
    <name type="scientific">Pan troglodytes</name>
    <name type="common">Chimpanzee</name>
    <dbReference type="NCBI Taxonomy" id="9598"/>
    <lineage>
        <taxon>Eukaryota</taxon>
        <taxon>Metazoa</taxon>
        <taxon>Chordata</taxon>
        <taxon>Craniata</taxon>
        <taxon>Vertebrata</taxon>
        <taxon>Euteleostomi</taxon>
        <taxon>Mammalia</taxon>
        <taxon>Eutheria</taxon>
        <taxon>Euarchontoglires</taxon>
        <taxon>Primates</taxon>
        <taxon>Haplorrhini</taxon>
        <taxon>Catarrhini</taxon>
        <taxon>Hominidae</taxon>
        <taxon>Pan</taxon>
    </lineage>
</organism>
<sequence length="950" mass="102228">MLSSWQGGPRPRQLLLWLLILAAWETGSGQLHYSVPEEAKHGTFVGRIAQDLGLELAELVPRLFRVASKTHGDLLEVNLQNGILFVNSRIDREELCGRSAECSVHLEVIVDRPLQVFHVEVKVRDINDNPPIFPESKKRIIVAESRPPETRFPLDGASDADIGVNSALTYRLDPNDYFTLDAQNSLEQMSSLSLVLRKTLDREEIQEHSLLLTASDGGKPELTGTVQLLITILDVNDNAPEFYQSVYKVTVLENAFNGTLVIKLNATDPDDGTNGDIVYSFRRPVSPAVVYAFTINPNNGEIRTKGKLDFEEKKLYEISVEAVDKGNIPMAGHCTLLVEVLDVNDNAPEVTITSLSLPIREDTQPSAIIALISVSDRDSGSNGQVTCTLTPHVPFKLVSTYKNYYSLVLDSALDRESVSAYELVVTARDGGSPSLWATASVSVGVADVNDNAPAFAQPEYTVFVKENNPPGCHIFTVSAQDADAQENALVSYSLVERRVGERALSSYVSVHAESGKVYALQPLDHEELELLQFQVSARDSGVPPLGSNVTLQVFVLDENDNAPALLTPGAGSAGGTVSELMPRSVGAGHVVVKVRAVDADSGYNAWLSYELQLAAVGARIPFCVGLYTGEISTTRPLDEVDAPHHRLLVLVKDHGEPALTATATVLLSLVESGQAPQASSRASAGAVGPEAALVDVNVYLIIAICAVSSLLVLTLLLYTALRCSAPPTEGVCAPGKPTLVCSSAAGSWSYSQQRRPRVCSGEGPHKTDLMAFSPSLPPCLGSAEGTGQREEDSEGLKEPRQPNPDWRYSASLRAGMHSSVHLEEAGILRAGPGGPDQQWPTVSSATPEPEAGEVSPPVGAGVNSNSWTFKYGPGNPKQSGPGELPDKFIIPGSPAIISIRQEPANSQIDKSDFITFGKKEETKKKKKKKKGNKTQEKKEKGNSTTDNSDQ</sequence>
<keyword id="KW-0106">Calcium</keyword>
<keyword id="KW-0130">Cell adhesion</keyword>
<keyword id="KW-1003">Cell membrane</keyword>
<keyword id="KW-0325">Glycoprotein</keyword>
<keyword id="KW-0472">Membrane</keyword>
<keyword id="KW-1185">Reference proteome</keyword>
<keyword id="KW-0677">Repeat</keyword>
<keyword id="KW-0732">Signal</keyword>
<keyword id="KW-0812">Transmembrane</keyword>
<keyword id="KW-1133">Transmembrane helix</keyword>
<comment type="function">
    <text>Potential calcium-dependent cell-adhesion protein. May be involved in the establishment and maintenance of specific neuronal connections in the brain.</text>
</comment>
<comment type="subcellular location">
    <subcellularLocation>
        <location evidence="1">Cell membrane</location>
        <topology evidence="1">Single-pass type I membrane protein</topology>
    </subcellularLocation>
</comment>
<gene>
    <name type="primary">PCDHA13</name>
</gene>
<proteinExistence type="inferred from homology"/>
<dbReference type="SMR" id="Q5DRF1"/>
<dbReference type="FunCoup" id="Q5DRF1">
    <property type="interactions" value="25"/>
</dbReference>
<dbReference type="GlyCosmos" id="Q5DRF1">
    <property type="glycosylation" value="3 sites, No reported glycans"/>
</dbReference>
<dbReference type="InParanoid" id="Q5DRF1"/>
<dbReference type="Proteomes" id="UP000002277">
    <property type="component" value="Unplaced"/>
</dbReference>
<dbReference type="GO" id="GO:0005886">
    <property type="term" value="C:plasma membrane"/>
    <property type="evidence" value="ECO:0000318"/>
    <property type="project" value="GO_Central"/>
</dbReference>
<dbReference type="GO" id="GO:0005509">
    <property type="term" value="F:calcium ion binding"/>
    <property type="evidence" value="ECO:0007669"/>
    <property type="project" value="InterPro"/>
</dbReference>
<dbReference type="GO" id="GO:0007155">
    <property type="term" value="P:cell adhesion"/>
    <property type="evidence" value="ECO:0000318"/>
    <property type="project" value="GO_Central"/>
</dbReference>
<dbReference type="GO" id="GO:0007156">
    <property type="term" value="P:homophilic cell adhesion via plasma membrane adhesion molecules"/>
    <property type="evidence" value="ECO:0007669"/>
    <property type="project" value="InterPro"/>
</dbReference>
<dbReference type="GO" id="GO:0007399">
    <property type="term" value="P:nervous system development"/>
    <property type="evidence" value="ECO:0007669"/>
    <property type="project" value="UniProtKB-ARBA"/>
</dbReference>
<dbReference type="CDD" id="cd11304">
    <property type="entry name" value="Cadherin_repeat"/>
    <property type="match status" value="6"/>
</dbReference>
<dbReference type="FunFam" id="2.60.40.60:FF:000001">
    <property type="entry name" value="Protocadherin alpha 2"/>
    <property type="match status" value="1"/>
</dbReference>
<dbReference type="FunFam" id="2.60.40.60:FF:000002">
    <property type="entry name" value="Protocadherin alpha 2"/>
    <property type="match status" value="1"/>
</dbReference>
<dbReference type="FunFam" id="2.60.40.60:FF:000003">
    <property type="entry name" value="Protocadherin alpha 2"/>
    <property type="match status" value="1"/>
</dbReference>
<dbReference type="FunFam" id="2.60.40.60:FF:000006">
    <property type="entry name" value="Protocadherin alpha 2"/>
    <property type="match status" value="1"/>
</dbReference>
<dbReference type="FunFam" id="2.60.40.60:FF:000007">
    <property type="entry name" value="Protocadherin alpha 2"/>
    <property type="match status" value="1"/>
</dbReference>
<dbReference type="FunFam" id="2.60.40.60:FF:000076">
    <property type="entry name" value="Protocadherin alpha 2"/>
    <property type="match status" value="1"/>
</dbReference>
<dbReference type="Gene3D" id="2.60.40.60">
    <property type="entry name" value="Cadherins"/>
    <property type="match status" value="6"/>
</dbReference>
<dbReference type="InterPro" id="IPR002126">
    <property type="entry name" value="Cadherin-like_dom"/>
</dbReference>
<dbReference type="InterPro" id="IPR015919">
    <property type="entry name" value="Cadherin-like_sf"/>
</dbReference>
<dbReference type="InterPro" id="IPR031904">
    <property type="entry name" value="Cadherin_CBD"/>
</dbReference>
<dbReference type="InterPro" id="IPR020894">
    <property type="entry name" value="Cadherin_CS"/>
</dbReference>
<dbReference type="InterPro" id="IPR013164">
    <property type="entry name" value="Cadherin_N"/>
</dbReference>
<dbReference type="InterPro" id="IPR050174">
    <property type="entry name" value="Protocadherin/Cadherin-CA"/>
</dbReference>
<dbReference type="PANTHER" id="PTHR24028">
    <property type="entry name" value="CADHERIN-87A"/>
    <property type="match status" value="1"/>
</dbReference>
<dbReference type="PANTHER" id="PTHR24028:SF101">
    <property type="entry name" value="PROTOCADHERIN ALPHA-13"/>
    <property type="match status" value="1"/>
</dbReference>
<dbReference type="Pfam" id="PF00028">
    <property type="entry name" value="Cadherin"/>
    <property type="match status" value="5"/>
</dbReference>
<dbReference type="Pfam" id="PF08266">
    <property type="entry name" value="Cadherin_2"/>
    <property type="match status" value="1"/>
</dbReference>
<dbReference type="Pfam" id="PF15974">
    <property type="entry name" value="Cadherin_tail"/>
    <property type="match status" value="1"/>
</dbReference>
<dbReference type="PRINTS" id="PR00205">
    <property type="entry name" value="CADHERIN"/>
</dbReference>
<dbReference type="SMART" id="SM00112">
    <property type="entry name" value="CA"/>
    <property type="match status" value="6"/>
</dbReference>
<dbReference type="SUPFAM" id="SSF49313">
    <property type="entry name" value="Cadherin-like"/>
    <property type="match status" value="6"/>
</dbReference>
<dbReference type="PROSITE" id="PS00232">
    <property type="entry name" value="CADHERIN_1"/>
    <property type="match status" value="5"/>
</dbReference>
<dbReference type="PROSITE" id="PS50268">
    <property type="entry name" value="CADHERIN_2"/>
    <property type="match status" value="6"/>
</dbReference>
<protein>
    <recommendedName>
        <fullName>Protocadherin alpha-13</fullName>
        <shortName>PCDH-alpha-13</shortName>
    </recommendedName>
</protein>
<name>PCDAD_PANTR</name>
<accession>Q5DRF1</accession>